<evidence type="ECO:0000250" key="1"/>
<evidence type="ECO:0000305" key="2"/>
<organism>
    <name type="scientific">Human adenovirus B serotype 11 (strain BC34)</name>
    <name type="common">HAdV-11</name>
    <name type="synonym">Human adenovirus 11A (strain BC34)</name>
    <dbReference type="NCBI Taxonomy" id="343463"/>
    <lineage>
        <taxon>Viruses</taxon>
        <taxon>Varidnaviria</taxon>
        <taxon>Bamfordvirae</taxon>
        <taxon>Preplasmiviricota</taxon>
        <taxon>Tectiliviricetes</taxon>
        <taxon>Rowavirales</taxon>
        <taxon>Adenoviridae</taxon>
        <taxon>Mastadenovirus</taxon>
        <taxon>Human mastadenovirus B</taxon>
    </lineage>
</organism>
<feature type="chain" id="PRO_0000221793" description="Fiber protein">
    <location>
        <begin position="1"/>
        <end position="325"/>
    </location>
</feature>
<accession>P35773</accession>
<dbReference type="EMBL" id="L08232">
    <property type="protein sequence ID" value="AAA42491.1"/>
    <property type="molecule type" value="Genomic_DNA"/>
</dbReference>
<dbReference type="SMR" id="P35773"/>
<dbReference type="GO" id="GO:0042025">
    <property type="term" value="C:host cell nucleus"/>
    <property type="evidence" value="ECO:0007669"/>
    <property type="project" value="UniProtKB-SubCell"/>
</dbReference>
<dbReference type="GO" id="GO:0019028">
    <property type="term" value="C:viral capsid"/>
    <property type="evidence" value="ECO:0007669"/>
    <property type="project" value="UniProtKB-KW"/>
</dbReference>
<dbReference type="GO" id="GO:0098671">
    <property type="term" value="P:adhesion receptor-mediated virion attachment to host cell"/>
    <property type="evidence" value="ECO:0007669"/>
    <property type="project" value="UniProtKB-KW"/>
</dbReference>
<dbReference type="GO" id="GO:0007155">
    <property type="term" value="P:cell adhesion"/>
    <property type="evidence" value="ECO:0007669"/>
    <property type="project" value="InterPro"/>
</dbReference>
<dbReference type="GO" id="GO:0046718">
    <property type="term" value="P:symbiont entry into host cell"/>
    <property type="evidence" value="ECO:0007669"/>
    <property type="project" value="UniProtKB-KW"/>
</dbReference>
<dbReference type="CDD" id="cd07964">
    <property type="entry name" value="RBP-H"/>
    <property type="match status" value="1"/>
</dbReference>
<dbReference type="Gene3D" id="2.60.90.10">
    <property type="entry name" value="Adenovirus pIV-related, attachment domain"/>
    <property type="match status" value="1"/>
</dbReference>
<dbReference type="Gene3D" id="2.10.25.20">
    <property type="entry name" value="reovirus attachment protein sigma1, domain 1"/>
    <property type="match status" value="1"/>
</dbReference>
<dbReference type="InterPro" id="IPR000931">
    <property type="entry name" value="Adeno_fibre"/>
</dbReference>
<dbReference type="InterPro" id="IPR000978">
    <property type="entry name" value="Adeno_fibre_knob"/>
</dbReference>
<dbReference type="InterPro" id="IPR000939">
    <property type="entry name" value="Adenobir_fibre_prot_rpt/shaft"/>
</dbReference>
<dbReference type="InterPro" id="IPR008982">
    <property type="entry name" value="Adenovirus_pIV-like_att"/>
</dbReference>
<dbReference type="InterPro" id="IPR009013">
    <property type="entry name" value="Attachment_protein_shaft_sf"/>
</dbReference>
<dbReference type="Pfam" id="PF00541">
    <property type="entry name" value="Adeno_knob"/>
    <property type="match status" value="1"/>
</dbReference>
<dbReference type="Pfam" id="PF00608">
    <property type="entry name" value="Adeno_shaft"/>
    <property type="match status" value="2"/>
</dbReference>
<dbReference type="PRINTS" id="PR00307">
    <property type="entry name" value="ADENOVSFIBRE"/>
</dbReference>
<dbReference type="SUPFAM" id="SSF51225">
    <property type="entry name" value="Fibre shaft of virus attachment proteins"/>
    <property type="match status" value="1"/>
</dbReference>
<dbReference type="SUPFAM" id="SSF49835">
    <property type="entry name" value="Virus attachment protein globular domain"/>
    <property type="match status" value="1"/>
</dbReference>
<reference key="1">
    <citation type="journal article" date="1993" name="Virology">
        <title>Hemagglutination properties and nucleotide sequence analysis of the fiber gene of adenovirus genome types 11p and 11a.</title>
        <authorList>
            <person name="Mei Y.-F."/>
            <person name="Wadell G."/>
        </authorList>
    </citation>
    <scope>NUCLEOTIDE SEQUENCE [GENOMIC DNA]</scope>
</reference>
<reference key="2">
    <citation type="journal article" date="2005" name="J. Virol.">
        <title>Adenovirus receptors.</title>
        <authorList>
            <person name="Zhang Y."/>
            <person name="Bergelson J.M."/>
        </authorList>
    </citation>
    <scope>REVIEW</scope>
</reference>
<protein>
    <recommendedName>
        <fullName>Fiber protein</fullName>
        <shortName>SPIKE</shortName>
    </recommendedName>
    <alternativeName>
        <fullName>Protein IV</fullName>
    </alternativeName>
</protein>
<name>SPIKE_ADE1A</name>
<sequence>MTKRVRLSDSFNPVYPYEDESTSQHPFINPGFISPNGFTQSPDGVLTLKCLTPLTTTGGSLQLKVGGGLTVDDTDGTLQENIGTTTPLVKTGHSIGLSLGAGLGTDENKLCTKLGKGLTFNSNNICIDDNINTLWTGINPTEANCQMMDSSESNDCKLILTLVKTGALVTAFVYVIGVSNNFNMLTTYRNINFTAELFFDSAGNLLTSLSSLKTPLNHKSGQNMATGAITNAKSFMPSTTAYPFNNNSREKENYIYGTCHYTASDHTAFPIDISVMLNQRAIRADTSYCIRITWSWNTGDAPEGQTSATTLVTSPFTFYYIREDD</sequence>
<keyword id="KW-0167">Capsid protein</keyword>
<keyword id="KW-1048">Host nucleus</keyword>
<keyword id="KW-0945">Host-virus interaction</keyword>
<keyword id="KW-0426">Late protein</keyword>
<keyword id="KW-1233">Viral attachment to host adhesion receptor</keyword>
<keyword id="KW-1161">Viral attachment to host cell</keyword>
<keyword id="KW-0946">Virion</keyword>
<keyword id="KW-1160">Virus entry into host cell</keyword>
<organismHost>
    <name type="scientific">Homo sapiens</name>
    <name type="common">Human</name>
    <dbReference type="NCBI Taxonomy" id="9606"/>
</organismHost>
<gene>
    <name type="ORF">L5</name>
</gene>
<comment type="function">
    <text>Forms spikes that protrude from each vertex of the icosahedral capsid. Interacts with host receptor CD46 to provide virion initial attachment to target cell. Fiber proteins are shed during virus entry, when virus is still at the cell surface.</text>
</comment>
<comment type="subunit">
    <text evidence="1">Homotrimer. Interacts with host receptor CD46. Interacts (via N-terminal tail region) with pentons (By similarity).</text>
</comment>
<comment type="subcellular location">
    <subcellularLocation>
        <location evidence="1">Virion</location>
    </subcellularLocation>
    <subcellularLocation>
        <location evidence="1">Host nucleus</location>
    </subcellularLocation>
    <text evidence="1">Anchored to the pentons, protrudes from the virion surface.</text>
</comment>
<comment type="induction">
    <text>Expressed in the late phase of the viral replicative cycle.</text>
</comment>
<comment type="domain">
    <text evidence="1">The tail region anchors the fiber to penton base capsomers, whereas the shaft, built from several repeated motifs, allows the knob to protrude from the virion.</text>
</comment>
<comment type="miscellaneous">
    <text evidence="1">All late proteins expressed from the major late promoter are produced by alternative splicing and alternative polyadenylation of the same gene giving rise to non-overlapping ORFs. A leader sequence is present in the N-terminus of all these mRNAs and is recognized by the viral shutoff protein to provide expression although conventional translation via ribosome scanning from the cap has been shut off in the host cell (By similarity).</text>
</comment>
<comment type="similarity">
    <text evidence="2">Belongs to the adenoviridae fiber family.</text>
</comment>
<proteinExistence type="evidence at transcript level"/>